<organism>
    <name type="scientific">Clavibacter michiganensis subsp. michiganensis (strain NCPPB 382)</name>
    <dbReference type="NCBI Taxonomy" id="443906"/>
    <lineage>
        <taxon>Bacteria</taxon>
        <taxon>Bacillati</taxon>
        <taxon>Actinomycetota</taxon>
        <taxon>Actinomycetes</taxon>
        <taxon>Micrococcales</taxon>
        <taxon>Microbacteriaceae</taxon>
        <taxon>Clavibacter</taxon>
    </lineage>
</organism>
<accession>A5CUA8</accession>
<dbReference type="EMBL" id="AM711867">
    <property type="protein sequence ID" value="CAN02695.1"/>
    <property type="molecule type" value="Genomic_DNA"/>
</dbReference>
<dbReference type="RefSeq" id="WP_012039301.1">
    <property type="nucleotide sequence ID" value="NC_009480.1"/>
</dbReference>
<dbReference type="SMR" id="A5CUA8"/>
<dbReference type="GeneID" id="92948615"/>
<dbReference type="KEGG" id="cmi:CMM_2612"/>
<dbReference type="eggNOG" id="COG0091">
    <property type="taxonomic scope" value="Bacteria"/>
</dbReference>
<dbReference type="HOGENOM" id="CLU_083987_3_3_11"/>
<dbReference type="OrthoDB" id="9805969at2"/>
<dbReference type="Proteomes" id="UP000001564">
    <property type="component" value="Chromosome"/>
</dbReference>
<dbReference type="GO" id="GO:0022625">
    <property type="term" value="C:cytosolic large ribosomal subunit"/>
    <property type="evidence" value="ECO:0007669"/>
    <property type="project" value="TreeGrafter"/>
</dbReference>
<dbReference type="GO" id="GO:0019843">
    <property type="term" value="F:rRNA binding"/>
    <property type="evidence" value="ECO:0007669"/>
    <property type="project" value="UniProtKB-UniRule"/>
</dbReference>
<dbReference type="GO" id="GO:0003735">
    <property type="term" value="F:structural constituent of ribosome"/>
    <property type="evidence" value="ECO:0007669"/>
    <property type="project" value="InterPro"/>
</dbReference>
<dbReference type="GO" id="GO:0006412">
    <property type="term" value="P:translation"/>
    <property type="evidence" value="ECO:0007669"/>
    <property type="project" value="UniProtKB-UniRule"/>
</dbReference>
<dbReference type="CDD" id="cd00336">
    <property type="entry name" value="Ribosomal_L22"/>
    <property type="match status" value="1"/>
</dbReference>
<dbReference type="Gene3D" id="3.90.470.10">
    <property type="entry name" value="Ribosomal protein L22/L17"/>
    <property type="match status" value="1"/>
</dbReference>
<dbReference type="HAMAP" id="MF_01331_B">
    <property type="entry name" value="Ribosomal_uL22_B"/>
    <property type="match status" value="1"/>
</dbReference>
<dbReference type="InterPro" id="IPR001063">
    <property type="entry name" value="Ribosomal_uL22"/>
</dbReference>
<dbReference type="InterPro" id="IPR005727">
    <property type="entry name" value="Ribosomal_uL22_bac/chlpt-type"/>
</dbReference>
<dbReference type="InterPro" id="IPR047867">
    <property type="entry name" value="Ribosomal_uL22_bac/org-type"/>
</dbReference>
<dbReference type="InterPro" id="IPR018260">
    <property type="entry name" value="Ribosomal_uL22_CS"/>
</dbReference>
<dbReference type="InterPro" id="IPR036394">
    <property type="entry name" value="Ribosomal_uL22_sf"/>
</dbReference>
<dbReference type="NCBIfam" id="TIGR01044">
    <property type="entry name" value="rplV_bact"/>
    <property type="match status" value="1"/>
</dbReference>
<dbReference type="PANTHER" id="PTHR13501">
    <property type="entry name" value="CHLOROPLAST 50S RIBOSOMAL PROTEIN L22-RELATED"/>
    <property type="match status" value="1"/>
</dbReference>
<dbReference type="PANTHER" id="PTHR13501:SF8">
    <property type="entry name" value="LARGE RIBOSOMAL SUBUNIT PROTEIN UL22M"/>
    <property type="match status" value="1"/>
</dbReference>
<dbReference type="Pfam" id="PF00237">
    <property type="entry name" value="Ribosomal_L22"/>
    <property type="match status" value="1"/>
</dbReference>
<dbReference type="SUPFAM" id="SSF54843">
    <property type="entry name" value="Ribosomal protein L22"/>
    <property type="match status" value="1"/>
</dbReference>
<dbReference type="PROSITE" id="PS00464">
    <property type="entry name" value="RIBOSOMAL_L22"/>
    <property type="match status" value="1"/>
</dbReference>
<evidence type="ECO:0000255" key="1">
    <source>
        <dbReference type="HAMAP-Rule" id="MF_01331"/>
    </source>
</evidence>
<evidence type="ECO:0000305" key="2"/>
<keyword id="KW-0687">Ribonucleoprotein</keyword>
<keyword id="KW-0689">Ribosomal protein</keyword>
<keyword id="KW-0694">RNA-binding</keyword>
<keyword id="KW-0699">rRNA-binding</keyword>
<feature type="chain" id="PRO_1000052559" description="Large ribosomal subunit protein uL22">
    <location>
        <begin position="1"/>
        <end position="130"/>
    </location>
</feature>
<gene>
    <name evidence="1" type="primary">rplV</name>
    <name type="ordered locus">CMM_2612</name>
</gene>
<name>RL22_CLAM3</name>
<proteinExistence type="inferred from homology"/>
<reference key="1">
    <citation type="journal article" date="2008" name="J. Bacteriol.">
        <title>The genome sequence of the tomato-pathogenic actinomycete Clavibacter michiganensis subsp. michiganensis NCPPB382 reveals a large island involved in pathogenicity.</title>
        <authorList>
            <person name="Gartemann K.-H."/>
            <person name="Abt B."/>
            <person name="Bekel T."/>
            <person name="Burger A."/>
            <person name="Engemann J."/>
            <person name="Fluegel M."/>
            <person name="Gaigalat L."/>
            <person name="Goesmann A."/>
            <person name="Graefen I."/>
            <person name="Kalinowski J."/>
            <person name="Kaup O."/>
            <person name="Kirchner O."/>
            <person name="Krause L."/>
            <person name="Linke B."/>
            <person name="McHardy A."/>
            <person name="Meyer F."/>
            <person name="Pohle S."/>
            <person name="Rueckert C."/>
            <person name="Schneiker S."/>
            <person name="Zellermann E.-M."/>
            <person name="Puehler A."/>
            <person name="Eichenlaub R."/>
            <person name="Kaiser O."/>
            <person name="Bartels D."/>
        </authorList>
    </citation>
    <scope>NUCLEOTIDE SEQUENCE [LARGE SCALE GENOMIC DNA]</scope>
    <source>
        <strain>NCPPB 382</strain>
    </source>
</reference>
<sequence>MVESIARVRHIRVTPQKARRVVDMIRGKQAEEALAILKFAPQGASEPIYKLVASAMANARVKADASNSFLAEQDLYIAKAFVDEGTTLKRFQPRAQGRAFRINKRTSHITVVLATPDEADVATTTKKASK</sequence>
<protein>
    <recommendedName>
        <fullName evidence="1">Large ribosomal subunit protein uL22</fullName>
    </recommendedName>
    <alternativeName>
        <fullName evidence="2">50S ribosomal protein L22</fullName>
    </alternativeName>
</protein>
<comment type="function">
    <text evidence="1">This protein binds specifically to 23S rRNA; its binding is stimulated by other ribosomal proteins, e.g. L4, L17, and L20. It is important during the early stages of 50S assembly. It makes multiple contacts with different domains of the 23S rRNA in the assembled 50S subunit and ribosome (By similarity).</text>
</comment>
<comment type="function">
    <text evidence="1">The globular domain of the protein is located near the polypeptide exit tunnel on the outside of the subunit, while an extended beta-hairpin is found that lines the wall of the exit tunnel in the center of the 70S ribosome.</text>
</comment>
<comment type="subunit">
    <text evidence="1">Part of the 50S ribosomal subunit.</text>
</comment>
<comment type="similarity">
    <text evidence="1">Belongs to the universal ribosomal protein uL22 family.</text>
</comment>